<protein>
    <recommendedName>
        <fullName>PDZ domain-containing protein 11</fullName>
    </recommendedName>
</protein>
<sequence>MDNRIPYDDYPVVFLPAYENPPAWIPPHERVYHPDYNNELTQFLPRIVTLKKPPGAQLGFNIRGGKASQLGIFISKVIPDSDAHRAGLQEGDQVLAVNDVDFQDIEHSKAVEILKTAREISMRVRFFPYNYHRQKERTVH</sequence>
<gene>
    <name type="primary">Pdzd11</name>
    <name type="synonym">Pdzk11</name>
</gene>
<dbReference type="EMBL" id="AK012624">
    <property type="protein sequence ID" value="BAB28364.1"/>
    <property type="molecule type" value="mRNA"/>
</dbReference>
<dbReference type="EMBL" id="BC004608">
    <property type="protein sequence ID" value="AAH04608.1"/>
    <property type="molecule type" value="mRNA"/>
</dbReference>
<dbReference type="CCDS" id="CCDS30304.1"/>
<dbReference type="RefSeq" id="NP_001343313.1">
    <property type="nucleotide sequence ID" value="NM_001356384.1"/>
</dbReference>
<dbReference type="RefSeq" id="NP_082579.1">
    <property type="nucleotide sequence ID" value="NM_028303.4"/>
</dbReference>
<dbReference type="RefSeq" id="XP_006528365.1">
    <property type="nucleotide sequence ID" value="XM_006528302.2"/>
</dbReference>
<dbReference type="RefSeq" id="XP_011245987.1">
    <property type="nucleotide sequence ID" value="XM_011247685.2"/>
</dbReference>
<dbReference type="RefSeq" id="XP_036017995.1">
    <property type="nucleotide sequence ID" value="XM_036162102.1"/>
</dbReference>
<dbReference type="PDB" id="1WI2">
    <property type="method" value="NMR"/>
    <property type="chains" value="A=37-127"/>
</dbReference>
<dbReference type="PDBsum" id="1WI2"/>
<dbReference type="SMR" id="Q9CZG9"/>
<dbReference type="BioGRID" id="215475">
    <property type="interactions" value="6"/>
</dbReference>
<dbReference type="FunCoup" id="Q9CZG9">
    <property type="interactions" value="310"/>
</dbReference>
<dbReference type="IntAct" id="Q9CZG9">
    <property type="interactions" value="2"/>
</dbReference>
<dbReference type="MINT" id="Q9CZG9"/>
<dbReference type="STRING" id="10090.ENSMUSP00000015812"/>
<dbReference type="iPTMnet" id="Q9CZG9"/>
<dbReference type="PhosphoSitePlus" id="Q9CZG9"/>
<dbReference type="SwissPalm" id="Q9CZG9"/>
<dbReference type="PaxDb" id="10090-ENSMUSP00000051068"/>
<dbReference type="PeptideAtlas" id="Q9CZG9"/>
<dbReference type="ProteomicsDB" id="288119"/>
<dbReference type="Pumba" id="Q9CZG9"/>
<dbReference type="Antibodypedia" id="581">
    <property type="antibodies" value="69 antibodies from 17 providers"/>
</dbReference>
<dbReference type="DNASU" id="72621"/>
<dbReference type="Ensembl" id="ENSMUST00000015812.12">
    <property type="protein sequence ID" value="ENSMUSP00000015812.6"/>
    <property type="gene ID" value="ENSMUSG00000015668.14"/>
</dbReference>
<dbReference type="Ensembl" id="ENSMUST00000059099.7">
    <property type="protein sequence ID" value="ENSMUSP00000051068.7"/>
    <property type="gene ID" value="ENSMUSG00000015668.14"/>
</dbReference>
<dbReference type="GeneID" id="72621"/>
<dbReference type="KEGG" id="mmu:72621"/>
<dbReference type="UCSC" id="uc009twe.1">
    <property type="organism name" value="mouse"/>
</dbReference>
<dbReference type="AGR" id="MGI:1919871"/>
<dbReference type="CTD" id="51248"/>
<dbReference type="MGI" id="MGI:1919871">
    <property type="gene designation" value="Pdzd11"/>
</dbReference>
<dbReference type="VEuPathDB" id="HostDB:ENSMUSG00000015668"/>
<dbReference type="eggNOG" id="KOG3528">
    <property type="taxonomic scope" value="Eukaryota"/>
</dbReference>
<dbReference type="GeneTree" id="ENSGT00940000153222"/>
<dbReference type="HOGENOM" id="CLU_133335_0_0_1"/>
<dbReference type="InParanoid" id="Q9CZG9"/>
<dbReference type="OMA" id="RGGREHN"/>
<dbReference type="OrthoDB" id="6021951at2759"/>
<dbReference type="PhylomeDB" id="Q9CZG9"/>
<dbReference type="TreeFam" id="TF318964"/>
<dbReference type="Reactome" id="R-MMU-196780">
    <property type="pathway name" value="Biotin transport and metabolism"/>
</dbReference>
<dbReference type="Reactome" id="R-MMU-199220">
    <property type="pathway name" value="Vitamin B5 (pantothenate) metabolism"/>
</dbReference>
<dbReference type="Reactome" id="R-MMU-425397">
    <property type="pathway name" value="Transport of vitamins, nucleosides, and related molecules"/>
</dbReference>
<dbReference type="Reactome" id="R-MMU-6803544">
    <property type="pathway name" value="Ion influx/efflux at host-pathogen interface"/>
</dbReference>
<dbReference type="Reactome" id="R-MMU-936837">
    <property type="pathway name" value="Ion transport by P-type ATPases"/>
</dbReference>
<dbReference type="BioGRID-ORCS" id="72621">
    <property type="hits" value="2 hits in 77 CRISPR screens"/>
</dbReference>
<dbReference type="ChiTaRS" id="Pdzd11">
    <property type="organism name" value="mouse"/>
</dbReference>
<dbReference type="EvolutionaryTrace" id="Q9CZG9"/>
<dbReference type="PRO" id="PR:Q9CZG9"/>
<dbReference type="Proteomes" id="UP000000589">
    <property type="component" value="Chromosome X"/>
</dbReference>
<dbReference type="RNAct" id="Q9CZG9">
    <property type="molecule type" value="protein"/>
</dbReference>
<dbReference type="Bgee" id="ENSMUSG00000015668">
    <property type="expression patterns" value="Expressed in right kidney and 259 other cell types or tissues"/>
</dbReference>
<dbReference type="GO" id="GO:0005912">
    <property type="term" value="C:adherens junction"/>
    <property type="evidence" value="ECO:0007669"/>
    <property type="project" value="UniProtKB-SubCell"/>
</dbReference>
<dbReference type="GO" id="GO:0016323">
    <property type="term" value="C:basolateral plasma membrane"/>
    <property type="evidence" value="ECO:0000250"/>
    <property type="project" value="UniProtKB"/>
</dbReference>
<dbReference type="GO" id="GO:0005829">
    <property type="term" value="C:cytosol"/>
    <property type="evidence" value="ECO:0000250"/>
    <property type="project" value="UniProtKB"/>
</dbReference>
<dbReference type="GO" id="GO:0005886">
    <property type="term" value="C:plasma membrane"/>
    <property type="evidence" value="ECO:0000266"/>
    <property type="project" value="MGI"/>
</dbReference>
<dbReference type="GO" id="GO:0046930">
    <property type="term" value="C:pore complex"/>
    <property type="evidence" value="ECO:0000315"/>
    <property type="project" value="UniProtKB"/>
</dbReference>
<dbReference type="GO" id="GO:0008047">
    <property type="term" value="F:enzyme activator activity"/>
    <property type="evidence" value="ECO:0000266"/>
    <property type="project" value="MGI"/>
</dbReference>
<dbReference type="GO" id="GO:0141109">
    <property type="term" value="F:transporter activator activity"/>
    <property type="evidence" value="ECO:0000266"/>
    <property type="project" value="MGI"/>
</dbReference>
<dbReference type="GO" id="GO:0006768">
    <property type="term" value="P:biotin metabolic process"/>
    <property type="evidence" value="ECO:0000266"/>
    <property type="project" value="MGI"/>
</dbReference>
<dbReference type="GO" id="GO:0046931">
    <property type="term" value="P:pore complex assembly"/>
    <property type="evidence" value="ECO:0000315"/>
    <property type="project" value="UniProtKB"/>
</dbReference>
<dbReference type="CDD" id="cd06752">
    <property type="entry name" value="PDZ_PDZD11-like"/>
    <property type="match status" value="1"/>
</dbReference>
<dbReference type="FunFam" id="2.30.42.10:FF:000096">
    <property type="entry name" value="PDZ domain-containing protein 11"/>
    <property type="match status" value="1"/>
</dbReference>
<dbReference type="Gene3D" id="2.30.42.10">
    <property type="match status" value="1"/>
</dbReference>
<dbReference type="InterPro" id="IPR051109">
    <property type="entry name" value="MAM_complex_regulator"/>
</dbReference>
<dbReference type="InterPro" id="IPR001478">
    <property type="entry name" value="PDZ"/>
</dbReference>
<dbReference type="InterPro" id="IPR036034">
    <property type="entry name" value="PDZ_sf"/>
</dbReference>
<dbReference type="PANTHER" id="PTHR14063">
    <property type="entry name" value="PROTEIN LIN-7 HOMOLOG"/>
    <property type="match status" value="1"/>
</dbReference>
<dbReference type="Pfam" id="PF00595">
    <property type="entry name" value="PDZ"/>
    <property type="match status" value="1"/>
</dbReference>
<dbReference type="SMART" id="SM00228">
    <property type="entry name" value="PDZ"/>
    <property type="match status" value="1"/>
</dbReference>
<dbReference type="SUPFAM" id="SSF50156">
    <property type="entry name" value="PDZ domain-like"/>
    <property type="match status" value="1"/>
</dbReference>
<dbReference type="PROSITE" id="PS50106">
    <property type="entry name" value="PDZ"/>
    <property type="match status" value="1"/>
</dbReference>
<accession>Q9CZG9</accession>
<name>PDZ11_MOUSE</name>
<organism>
    <name type="scientific">Mus musculus</name>
    <name type="common">Mouse</name>
    <dbReference type="NCBI Taxonomy" id="10090"/>
    <lineage>
        <taxon>Eukaryota</taxon>
        <taxon>Metazoa</taxon>
        <taxon>Chordata</taxon>
        <taxon>Craniata</taxon>
        <taxon>Vertebrata</taxon>
        <taxon>Euteleostomi</taxon>
        <taxon>Mammalia</taxon>
        <taxon>Eutheria</taxon>
        <taxon>Euarchontoglires</taxon>
        <taxon>Glires</taxon>
        <taxon>Rodentia</taxon>
        <taxon>Myomorpha</taxon>
        <taxon>Muroidea</taxon>
        <taxon>Muridae</taxon>
        <taxon>Murinae</taxon>
        <taxon>Mus</taxon>
        <taxon>Mus</taxon>
    </lineage>
</organism>
<reference key="1">
    <citation type="journal article" date="2005" name="Science">
        <title>The transcriptional landscape of the mammalian genome.</title>
        <authorList>
            <person name="Carninci P."/>
            <person name="Kasukawa T."/>
            <person name="Katayama S."/>
            <person name="Gough J."/>
            <person name="Frith M.C."/>
            <person name="Maeda N."/>
            <person name="Oyama R."/>
            <person name="Ravasi T."/>
            <person name="Lenhard B."/>
            <person name="Wells C."/>
            <person name="Kodzius R."/>
            <person name="Shimokawa K."/>
            <person name="Bajic V.B."/>
            <person name="Brenner S.E."/>
            <person name="Batalov S."/>
            <person name="Forrest A.R."/>
            <person name="Zavolan M."/>
            <person name="Davis M.J."/>
            <person name="Wilming L.G."/>
            <person name="Aidinis V."/>
            <person name="Allen J.E."/>
            <person name="Ambesi-Impiombato A."/>
            <person name="Apweiler R."/>
            <person name="Aturaliya R.N."/>
            <person name="Bailey T.L."/>
            <person name="Bansal M."/>
            <person name="Baxter L."/>
            <person name="Beisel K.W."/>
            <person name="Bersano T."/>
            <person name="Bono H."/>
            <person name="Chalk A.M."/>
            <person name="Chiu K.P."/>
            <person name="Choudhary V."/>
            <person name="Christoffels A."/>
            <person name="Clutterbuck D.R."/>
            <person name="Crowe M.L."/>
            <person name="Dalla E."/>
            <person name="Dalrymple B.P."/>
            <person name="de Bono B."/>
            <person name="Della Gatta G."/>
            <person name="di Bernardo D."/>
            <person name="Down T."/>
            <person name="Engstrom P."/>
            <person name="Fagiolini M."/>
            <person name="Faulkner G."/>
            <person name="Fletcher C.F."/>
            <person name="Fukushima T."/>
            <person name="Furuno M."/>
            <person name="Futaki S."/>
            <person name="Gariboldi M."/>
            <person name="Georgii-Hemming P."/>
            <person name="Gingeras T.R."/>
            <person name="Gojobori T."/>
            <person name="Green R.E."/>
            <person name="Gustincich S."/>
            <person name="Harbers M."/>
            <person name="Hayashi Y."/>
            <person name="Hensch T.K."/>
            <person name="Hirokawa N."/>
            <person name="Hill D."/>
            <person name="Huminiecki L."/>
            <person name="Iacono M."/>
            <person name="Ikeo K."/>
            <person name="Iwama A."/>
            <person name="Ishikawa T."/>
            <person name="Jakt M."/>
            <person name="Kanapin A."/>
            <person name="Katoh M."/>
            <person name="Kawasawa Y."/>
            <person name="Kelso J."/>
            <person name="Kitamura H."/>
            <person name="Kitano H."/>
            <person name="Kollias G."/>
            <person name="Krishnan S.P."/>
            <person name="Kruger A."/>
            <person name="Kummerfeld S.K."/>
            <person name="Kurochkin I.V."/>
            <person name="Lareau L.F."/>
            <person name="Lazarevic D."/>
            <person name="Lipovich L."/>
            <person name="Liu J."/>
            <person name="Liuni S."/>
            <person name="McWilliam S."/>
            <person name="Madan Babu M."/>
            <person name="Madera M."/>
            <person name="Marchionni L."/>
            <person name="Matsuda H."/>
            <person name="Matsuzawa S."/>
            <person name="Miki H."/>
            <person name="Mignone F."/>
            <person name="Miyake S."/>
            <person name="Morris K."/>
            <person name="Mottagui-Tabar S."/>
            <person name="Mulder N."/>
            <person name="Nakano N."/>
            <person name="Nakauchi H."/>
            <person name="Ng P."/>
            <person name="Nilsson R."/>
            <person name="Nishiguchi S."/>
            <person name="Nishikawa S."/>
            <person name="Nori F."/>
            <person name="Ohara O."/>
            <person name="Okazaki Y."/>
            <person name="Orlando V."/>
            <person name="Pang K.C."/>
            <person name="Pavan W.J."/>
            <person name="Pavesi G."/>
            <person name="Pesole G."/>
            <person name="Petrovsky N."/>
            <person name="Piazza S."/>
            <person name="Reed J."/>
            <person name="Reid J.F."/>
            <person name="Ring B.Z."/>
            <person name="Ringwald M."/>
            <person name="Rost B."/>
            <person name="Ruan Y."/>
            <person name="Salzberg S.L."/>
            <person name="Sandelin A."/>
            <person name="Schneider C."/>
            <person name="Schoenbach C."/>
            <person name="Sekiguchi K."/>
            <person name="Semple C.A."/>
            <person name="Seno S."/>
            <person name="Sessa L."/>
            <person name="Sheng Y."/>
            <person name="Shibata Y."/>
            <person name="Shimada H."/>
            <person name="Shimada K."/>
            <person name="Silva D."/>
            <person name="Sinclair B."/>
            <person name="Sperling S."/>
            <person name="Stupka E."/>
            <person name="Sugiura K."/>
            <person name="Sultana R."/>
            <person name="Takenaka Y."/>
            <person name="Taki K."/>
            <person name="Tammoja K."/>
            <person name="Tan S.L."/>
            <person name="Tang S."/>
            <person name="Taylor M.S."/>
            <person name="Tegner J."/>
            <person name="Teichmann S.A."/>
            <person name="Ueda H.R."/>
            <person name="van Nimwegen E."/>
            <person name="Verardo R."/>
            <person name="Wei C.L."/>
            <person name="Yagi K."/>
            <person name="Yamanishi H."/>
            <person name="Zabarovsky E."/>
            <person name="Zhu S."/>
            <person name="Zimmer A."/>
            <person name="Hide W."/>
            <person name="Bult C."/>
            <person name="Grimmond S.M."/>
            <person name="Teasdale R.D."/>
            <person name="Liu E.T."/>
            <person name="Brusic V."/>
            <person name="Quackenbush J."/>
            <person name="Wahlestedt C."/>
            <person name="Mattick J.S."/>
            <person name="Hume D.A."/>
            <person name="Kai C."/>
            <person name="Sasaki D."/>
            <person name="Tomaru Y."/>
            <person name="Fukuda S."/>
            <person name="Kanamori-Katayama M."/>
            <person name="Suzuki M."/>
            <person name="Aoki J."/>
            <person name="Arakawa T."/>
            <person name="Iida J."/>
            <person name="Imamura K."/>
            <person name="Itoh M."/>
            <person name="Kato T."/>
            <person name="Kawaji H."/>
            <person name="Kawagashira N."/>
            <person name="Kawashima T."/>
            <person name="Kojima M."/>
            <person name="Kondo S."/>
            <person name="Konno H."/>
            <person name="Nakano K."/>
            <person name="Ninomiya N."/>
            <person name="Nishio T."/>
            <person name="Okada M."/>
            <person name="Plessy C."/>
            <person name="Shibata K."/>
            <person name="Shiraki T."/>
            <person name="Suzuki S."/>
            <person name="Tagami M."/>
            <person name="Waki K."/>
            <person name="Watahiki A."/>
            <person name="Okamura-Oho Y."/>
            <person name="Suzuki H."/>
            <person name="Kawai J."/>
            <person name="Hayashizaki Y."/>
        </authorList>
    </citation>
    <scope>NUCLEOTIDE SEQUENCE [LARGE SCALE MRNA]</scope>
    <source>
        <strain>C57BL/6J</strain>
        <tissue>Embryo</tissue>
    </source>
</reference>
<reference key="2">
    <citation type="journal article" date="2004" name="Genome Res.">
        <title>The status, quality, and expansion of the NIH full-length cDNA project: the Mammalian Gene Collection (MGC).</title>
        <authorList>
            <consortium name="The MGC Project Team"/>
        </authorList>
    </citation>
    <scope>NUCLEOTIDE SEQUENCE [LARGE SCALE MRNA]</scope>
    <source>
        <strain>FVB/N</strain>
        <tissue>Mammary tumor</tissue>
    </source>
</reference>
<reference key="3">
    <citation type="journal article" date="2010" name="Cell">
        <title>A tissue-specific atlas of mouse protein phosphorylation and expression.</title>
        <authorList>
            <person name="Huttlin E.L."/>
            <person name="Jedrychowski M.P."/>
            <person name="Elias J.E."/>
            <person name="Goswami T."/>
            <person name="Rad R."/>
            <person name="Beausoleil S.A."/>
            <person name="Villen J."/>
            <person name="Haas W."/>
            <person name="Sowa M.E."/>
            <person name="Gygi S.P."/>
        </authorList>
    </citation>
    <scope>IDENTIFICATION BY MASS SPECTROMETRY [LARGE SCALE ANALYSIS]</scope>
    <source>
        <tissue>Kidney</tissue>
        <tissue>Lung</tissue>
    </source>
</reference>
<reference key="4">
    <citation type="journal article" date="2018" name="Cell Rep.">
        <title>A Dock-and-Lock Mechanism Clusters ADAM10 at Cell-Cell Junctions to Promote alpha-Toxin Cytotoxicity.</title>
        <authorList>
            <person name="Shah J."/>
            <person name="Rouaud F."/>
            <person name="Guerrera D."/>
            <person name="Vasileva E."/>
            <person name="Popov L.M."/>
            <person name="Kelley W.L."/>
            <person name="Rubinstein E."/>
            <person name="Carette J.E."/>
            <person name="Amieva M.R."/>
            <person name="Citi S."/>
        </authorList>
    </citation>
    <scope>FUNCTION</scope>
    <scope>INTERACTION WITH PLEKHA7</scope>
    <scope>SUBCELLULAR LOCATION</scope>
</reference>
<reference key="5">
    <citation type="submission" date="2004-05" db="PDB data bank">
        <title>Solution structure of the PDZ domain from RIKEN cDNA 2700099c19.</title>
        <authorList>
            <consortium name="RIKEN structural genomics initiative (RSGI)"/>
        </authorList>
    </citation>
    <scope>STRUCTURE BY NMR OF 37-127</scope>
</reference>
<comment type="function">
    <text evidence="3">Mediates docking of ADAM10 to zonula adherens by interacting with PLEKHA7 which is required for PLEKHA7 to interact with the ADAM10-binding protein TSPAN33.</text>
</comment>
<comment type="subunit">
    <text evidence="1 3">Interacts with ATP2B1, ATP2B2, ATP2B3, ATP2B4 and ATP7A (By similarity). Interacts with PLEKHA7 (via WW domains) at zonula adherens; this interaction is essential for the interaction between PLEKHA7 and the ADAM10-binding protein TSPAN33 (PubMed:30463011). Interacts with SLC5A6 (By similarity).</text>
</comment>
<comment type="subcellular location">
    <subcellularLocation>
        <location evidence="1">Cytoplasm</location>
    </subcellularLocation>
    <subcellularLocation>
        <location evidence="3">Cell junction</location>
        <location evidence="3">Adherens junction</location>
    </subcellularLocation>
    <subcellularLocation>
        <location evidence="3">Cell membrane</location>
    </subcellularLocation>
</comment>
<keyword id="KW-0002">3D-structure</keyword>
<keyword id="KW-0965">Cell junction</keyword>
<keyword id="KW-1003">Cell membrane</keyword>
<keyword id="KW-0963">Cytoplasm</keyword>
<keyword id="KW-0472">Membrane</keyword>
<keyword id="KW-1185">Reference proteome</keyword>
<feature type="chain" id="PRO_0000058274" description="PDZ domain-containing protein 11">
    <location>
        <begin position="1"/>
        <end position="140"/>
    </location>
</feature>
<feature type="domain" description="PDZ" evidence="2">
    <location>
        <begin position="47"/>
        <end position="129"/>
    </location>
</feature>
<feature type="strand" evidence="4">
    <location>
        <begin position="46"/>
        <end position="50"/>
    </location>
</feature>
<feature type="strand" evidence="4">
    <location>
        <begin position="59"/>
        <end position="63"/>
    </location>
</feature>
<feature type="strand" evidence="4">
    <location>
        <begin position="66"/>
        <end position="68"/>
    </location>
</feature>
<feature type="strand" evidence="4">
    <location>
        <begin position="73"/>
        <end position="77"/>
    </location>
</feature>
<feature type="helix" evidence="4">
    <location>
        <begin position="82"/>
        <end position="86"/>
    </location>
</feature>
<feature type="strand" evidence="4">
    <location>
        <begin position="93"/>
        <end position="97"/>
    </location>
</feature>
<feature type="helix" evidence="4">
    <location>
        <begin position="107"/>
        <end position="116"/>
    </location>
</feature>
<feature type="strand" evidence="4">
    <location>
        <begin position="117"/>
        <end position="125"/>
    </location>
</feature>
<proteinExistence type="evidence at protein level"/>
<evidence type="ECO:0000250" key="1">
    <source>
        <dbReference type="UniProtKB" id="Q5EBL8"/>
    </source>
</evidence>
<evidence type="ECO:0000255" key="2">
    <source>
        <dbReference type="PROSITE-ProRule" id="PRU00143"/>
    </source>
</evidence>
<evidence type="ECO:0000269" key="3">
    <source>
    </source>
</evidence>
<evidence type="ECO:0007829" key="4">
    <source>
        <dbReference type="PDB" id="1WI2"/>
    </source>
</evidence>